<evidence type="ECO:0000250" key="1"/>
<evidence type="ECO:0000250" key="2">
    <source>
        <dbReference type="UniProtKB" id="O55007"/>
    </source>
</evidence>
<evidence type="ECO:0000250" key="3">
    <source>
        <dbReference type="UniProtKB" id="Q6GYP7"/>
    </source>
</evidence>
<evidence type="ECO:0000255" key="4"/>
<evidence type="ECO:0000255" key="5">
    <source>
        <dbReference type="PROSITE-ProRule" id="PRU00165"/>
    </source>
</evidence>
<evidence type="ECO:0000256" key="6">
    <source>
        <dbReference type="SAM" id="MobiDB-lite"/>
    </source>
</evidence>
<evidence type="ECO:0000269" key="7">
    <source>
    </source>
</evidence>
<evidence type="ECO:0000269" key="8">
    <source>
    </source>
</evidence>
<evidence type="ECO:0000269" key="9">
    <source>
    </source>
</evidence>
<evidence type="ECO:0000303" key="10">
    <source>
    </source>
</evidence>
<evidence type="ECO:0000303" key="11">
    <source>
    </source>
</evidence>
<evidence type="ECO:0000303" key="12">
    <source>
    </source>
</evidence>
<evidence type="ECO:0000303" key="13">
    <source>
    </source>
</evidence>
<evidence type="ECO:0000303" key="14">
    <source>
    </source>
</evidence>
<evidence type="ECO:0000303" key="15">
    <source>
    </source>
</evidence>
<evidence type="ECO:0000305" key="16"/>
<evidence type="ECO:0007744" key="17">
    <source>
    </source>
</evidence>
<evidence type="ECO:0007744" key="18">
    <source>
    </source>
</evidence>
<evidence type="ECO:0007744" key="19">
    <source>
    </source>
</evidence>
<evidence type="ECO:0007744" key="20">
    <source>
    </source>
</evidence>
<evidence type="ECO:0007744" key="21">
    <source>
    </source>
</evidence>
<evidence type="ECO:0007744" key="22">
    <source>
    </source>
</evidence>
<evidence type="ECO:0007744" key="23">
    <source>
    </source>
</evidence>
<reference key="1">
    <citation type="journal article" date="2004" name="Genomics">
        <title>Cloning, genomic structure and expression profile of TULIP1 (GARNL1), a brain-expressed candidate gene for 14q13-linked neurological phenotypes and its murine homolog.</title>
        <authorList>
            <person name="Schwarzbraun T."/>
            <person name="Vincent J.B."/>
            <person name="Schumacher A."/>
            <person name="Geschwind D.H."/>
            <person name="Oliveira J."/>
            <person name="Windpassinger C."/>
            <person name="Ofner L."/>
            <person name="Ledinegg M.K."/>
            <person name="Kroisel P.M."/>
            <person name="Wagner K."/>
            <person name="Petek E."/>
        </authorList>
    </citation>
    <scope>NUCLEOTIDE SEQUENCE [MRNA] (ISOFORMS 1 AND 2)</scope>
    <scope>TISSUE SPECIFICITY</scope>
</reference>
<reference key="2">
    <citation type="journal article" date="2009" name="J. Biol. Chem.">
        <title>Tuberous sclerosis tumor suppressor complex-like complexes act as GTPase-activating proteins for Ral GTPases.</title>
        <authorList>
            <person name="Shirakawa R."/>
            <person name="Fukai S."/>
            <person name="Kawato M."/>
            <person name="Higashi T."/>
            <person name="Kondo H."/>
            <person name="Ikeda T."/>
            <person name="Nakayama E."/>
            <person name="Okawa K."/>
            <person name="Nureki O."/>
            <person name="Kimura T."/>
            <person name="Kita T."/>
            <person name="Horiuchi H."/>
        </authorList>
    </citation>
    <scope>NUCLEOTIDE SEQUENCE [MRNA] (ISOFORM 6)</scope>
    <scope>VARIANT ALA-931</scope>
    <scope>MUTAGENESIS OF ASN-1903</scope>
</reference>
<reference key="3">
    <citation type="journal article" date="1998" name="DNA Res.">
        <title>Prediction of the coding sequences of unidentified human genes. XII. The complete sequences of 100 new cDNA clones from brain which code for large proteins in vitro.</title>
        <authorList>
            <person name="Nagase T."/>
            <person name="Ishikawa K."/>
            <person name="Suyama M."/>
            <person name="Kikuno R."/>
            <person name="Hirosawa M."/>
            <person name="Miyajima N."/>
            <person name="Tanaka A."/>
            <person name="Kotani H."/>
            <person name="Nomura N."/>
            <person name="Ohara O."/>
        </authorList>
    </citation>
    <scope>NUCLEOTIDE SEQUENCE [LARGE SCALE MRNA] (ISOFORM 3)</scope>
    <source>
        <tissue>Brain</tissue>
    </source>
</reference>
<reference key="4">
    <citation type="journal article" date="2003" name="Nature">
        <title>The DNA sequence and analysis of human chromosome 14.</title>
        <authorList>
            <person name="Heilig R."/>
            <person name="Eckenberg R."/>
            <person name="Petit J.-L."/>
            <person name="Fonknechten N."/>
            <person name="Da Silva C."/>
            <person name="Cattolico L."/>
            <person name="Levy M."/>
            <person name="Barbe V."/>
            <person name="De Berardinis V."/>
            <person name="Ureta-Vidal A."/>
            <person name="Pelletier E."/>
            <person name="Vico V."/>
            <person name="Anthouard V."/>
            <person name="Rowen L."/>
            <person name="Madan A."/>
            <person name="Qin S."/>
            <person name="Sun H."/>
            <person name="Du H."/>
            <person name="Pepin K."/>
            <person name="Artiguenave F."/>
            <person name="Robert C."/>
            <person name="Cruaud C."/>
            <person name="Bruels T."/>
            <person name="Jaillon O."/>
            <person name="Friedlander L."/>
            <person name="Samson G."/>
            <person name="Brottier P."/>
            <person name="Cure S."/>
            <person name="Segurens B."/>
            <person name="Aniere F."/>
            <person name="Samain S."/>
            <person name="Crespeau H."/>
            <person name="Abbasi N."/>
            <person name="Aiach N."/>
            <person name="Boscus D."/>
            <person name="Dickhoff R."/>
            <person name="Dors M."/>
            <person name="Dubois I."/>
            <person name="Friedman C."/>
            <person name="Gouyvenoux M."/>
            <person name="James R."/>
            <person name="Madan A."/>
            <person name="Mairey-Estrada B."/>
            <person name="Mangenot S."/>
            <person name="Martins N."/>
            <person name="Menard M."/>
            <person name="Oztas S."/>
            <person name="Ratcliffe A."/>
            <person name="Shaffer T."/>
            <person name="Trask B."/>
            <person name="Vacherie B."/>
            <person name="Bellemere C."/>
            <person name="Belser C."/>
            <person name="Besnard-Gonnet M."/>
            <person name="Bartol-Mavel D."/>
            <person name="Boutard M."/>
            <person name="Briez-Silla S."/>
            <person name="Combette S."/>
            <person name="Dufosse-Laurent V."/>
            <person name="Ferron C."/>
            <person name="Lechaplais C."/>
            <person name="Louesse C."/>
            <person name="Muselet D."/>
            <person name="Magdelenat G."/>
            <person name="Pateau E."/>
            <person name="Petit E."/>
            <person name="Sirvain-Trukniewicz P."/>
            <person name="Trybou A."/>
            <person name="Vega-Czarny N."/>
            <person name="Bataille E."/>
            <person name="Bluet E."/>
            <person name="Bordelais I."/>
            <person name="Dubois M."/>
            <person name="Dumont C."/>
            <person name="Guerin T."/>
            <person name="Haffray S."/>
            <person name="Hammadi R."/>
            <person name="Muanga J."/>
            <person name="Pellouin V."/>
            <person name="Robert D."/>
            <person name="Wunderle E."/>
            <person name="Gauguet G."/>
            <person name="Roy A."/>
            <person name="Sainte-Marthe L."/>
            <person name="Verdier J."/>
            <person name="Verdier-Discala C."/>
            <person name="Hillier L.W."/>
            <person name="Fulton L."/>
            <person name="McPherson J."/>
            <person name="Matsuda F."/>
            <person name="Wilson R."/>
            <person name="Scarpelli C."/>
            <person name="Gyapay G."/>
            <person name="Wincker P."/>
            <person name="Saurin W."/>
            <person name="Quetier F."/>
            <person name="Waterston R."/>
            <person name="Hood L."/>
            <person name="Weissenbach J."/>
        </authorList>
    </citation>
    <scope>NUCLEOTIDE SEQUENCE [LARGE SCALE GENOMIC DNA]</scope>
</reference>
<reference key="5">
    <citation type="journal article" date="2004" name="Genome Res.">
        <title>The status, quality, and expansion of the NIH full-length cDNA project: the Mammalian Gene Collection (MGC).</title>
        <authorList>
            <consortium name="The MGC Project Team"/>
        </authorList>
    </citation>
    <scope>NUCLEOTIDE SEQUENCE [LARGE SCALE MRNA] (ISOFORM 7)</scope>
    <scope>NUCLEOTIDE SEQUENCE [LARGE SCALE MRNA] OF 1147-2036 (ISOFORM 1)</scope>
    <scope>NUCLEOTIDE SEQUENCE [LARGE SCALE MRNA] OF 1719-2036 (ISOFORM 5)</scope>
    <source>
        <tissue>Brain</tissue>
        <tissue>Skin</tissue>
    </source>
</reference>
<reference key="6">
    <citation type="journal article" date="2007" name="BMC Genomics">
        <title>The full-ORF clone resource of the German cDNA consortium.</title>
        <authorList>
            <person name="Bechtel S."/>
            <person name="Rosenfelder H."/>
            <person name="Duda A."/>
            <person name="Schmidt C.P."/>
            <person name="Ernst U."/>
            <person name="Wellenreuther R."/>
            <person name="Mehrle A."/>
            <person name="Schuster C."/>
            <person name="Bahr A."/>
            <person name="Bloecker H."/>
            <person name="Heubner D."/>
            <person name="Hoerlein A."/>
            <person name="Michel G."/>
            <person name="Wedler H."/>
            <person name="Koehrer K."/>
            <person name="Ottenwaelder B."/>
            <person name="Poustka A."/>
            <person name="Wiemann S."/>
            <person name="Schupp I."/>
        </authorList>
    </citation>
    <scope>NUCLEOTIDE SEQUENCE [LARGE SCALE MRNA] OF 1167-2036 (ISOFORM 4)</scope>
    <source>
        <tissue>Lymph node</tissue>
    </source>
</reference>
<reference key="7">
    <citation type="journal article" date="2004" name="Nat. Genet.">
        <title>Complete sequencing and characterization of 21,243 full-length human cDNAs.</title>
        <authorList>
            <person name="Ota T."/>
            <person name="Suzuki Y."/>
            <person name="Nishikawa T."/>
            <person name="Otsuki T."/>
            <person name="Sugiyama T."/>
            <person name="Irie R."/>
            <person name="Wakamatsu A."/>
            <person name="Hayashi K."/>
            <person name="Sato H."/>
            <person name="Nagai K."/>
            <person name="Kimura K."/>
            <person name="Makita H."/>
            <person name="Sekine M."/>
            <person name="Obayashi M."/>
            <person name="Nishi T."/>
            <person name="Shibahara T."/>
            <person name="Tanaka T."/>
            <person name="Ishii S."/>
            <person name="Yamamoto J."/>
            <person name="Saito K."/>
            <person name="Kawai Y."/>
            <person name="Isono Y."/>
            <person name="Nakamura Y."/>
            <person name="Nagahari K."/>
            <person name="Murakami K."/>
            <person name="Yasuda T."/>
            <person name="Iwayanagi T."/>
            <person name="Wagatsuma M."/>
            <person name="Shiratori A."/>
            <person name="Sudo H."/>
            <person name="Hosoiri T."/>
            <person name="Kaku Y."/>
            <person name="Kodaira H."/>
            <person name="Kondo H."/>
            <person name="Sugawara M."/>
            <person name="Takahashi M."/>
            <person name="Kanda K."/>
            <person name="Yokoi T."/>
            <person name="Furuya T."/>
            <person name="Kikkawa E."/>
            <person name="Omura Y."/>
            <person name="Abe K."/>
            <person name="Kamihara K."/>
            <person name="Katsuta N."/>
            <person name="Sato K."/>
            <person name="Tanikawa M."/>
            <person name="Yamazaki M."/>
            <person name="Ninomiya K."/>
            <person name="Ishibashi T."/>
            <person name="Yamashita H."/>
            <person name="Murakawa K."/>
            <person name="Fujimori K."/>
            <person name="Tanai H."/>
            <person name="Kimata M."/>
            <person name="Watanabe M."/>
            <person name="Hiraoka S."/>
            <person name="Chiba Y."/>
            <person name="Ishida S."/>
            <person name="Ono Y."/>
            <person name="Takiguchi S."/>
            <person name="Watanabe S."/>
            <person name="Yosida M."/>
            <person name="Hotuta T."/>
            <person name="Kusano J."/>
            <person name="Kanehori K."/>
            <person name="Takahashi-Fujii A."/>
            <person name="Hara H."/>
            <person name="Tanase T.-O."/>
            <person name="Nomura Y."/>
            <person name="Togiya S."/>
            <person name="Komai F."/>
            <person name="Hara R."/>
            <person name="Takeuchi K."/>
            <person name="Arita M."/>
            <person name="Imose N."/>
            <person name="Musashino K."/>
            <person name="Yuuki H."/>
            <person name="Oshima A."/>
            <person name="Sasaki N."/>
            <person name="Aotsuka S."/>
            <person name="Yoshikawa Y."/>
            <person name="Matsunawa H."/>
            <person name="Ichihara T."/>
            <person name="Shiohata N."/>
            <person name="Sano S."/>
            <person name="Moriya S."/>
            <person name="Momiyama H."/>
            <person name="Satoh N."/>
            <person name="Takami S."/>
            <person name="Terashima Y."/>
            <person name="Suzuki O."/>
            <person name="Nakagawa S."/>
            <person name="Senoh A."/>
            <person name="Mizoguchi H."/>
            <person name="Goto Y."/>
            <person name="Shimizu F."/>
            <person name="Wakebe H."/>
            <person name="Hishigaki H."/>
            <person name="Watanabe T."/>
            <person name="Sugiyama A."/>
            <person name="Takemoto M."/>
            <person name="Kawakami B."/>
            <person name="Yamazaki M."/>
            <person name="Watanabe K."/>
            <person name="Kumagai A."/>
            <person name="Itakura S."/>
            <person name="Fukuzumi Y."/>
            <person name="Fujimori Y."/>
            <person name="Komiyama M."/>
            <person name="Tashiro H."/>
            <person name="Tanigami A."/>
            <person name="Fujiwara T."/>
            <person name="Ono T."/>
            <person name="Yamada K."/>
            <person name="Fujii Y."/>
            <person name="Ozaki K."/>
            <person name="Hirao M."/>
            <person name="Ohmori Y."/>
            <person name="Kawabata A."/>
            <person name="Hikiji T."/>
            <person name="Kobatake N."/>
            <person name="Inagaki H."/>
            <person name="Ikema Y."/>
            <person name="Okamoto S."/>
            <person name="Okitani R."/>
            <person name="Kawakami T."/>
            <person name="Noguchi S."/>
            <person name="Itoh T."/>
            <person name="Shigeta K."/>
            <person name="Senba T."/>
            <person name="Matsumura K."/>
            <person name="Nakajima Y."/>
            <person name="Mizuno T."/>
            <person name="Morinaga M."/>
            <person name="Sasaki M."/>
            <person name="Togashi T."/>
            <person name="Oyama M."/>
            <person name="Hata H."/>
            <person name="Watanabe M."/>
            <person name="Komatsu T."/>
            <person name="Mizushima-Sugano J."/>
            <person name="Satoh T."/>
            <person name="Shirai Y."/>
            <person name="Takahashi Y."/>
            <person name="Nakagawa K."/>
            <person name="Okumura K."/>
            <person name="Nagase T."/>
            <person name="Nomura N."/>
            <person name="Kikuchi H."/>
            <person name="Masuho Y."/>
            <person name="Yamashita R."/>
            <person name="Nakai K."/>
            <person name="Yada T."/>
            <person name="Nakamura Y."/>
            <person name="Ohara O."/>
            <person name="Isogai T."/>
            <person name="Sugano S."/>
        </authorList>
    </citation>
    <scope>NUCLEOTIDE SEQUENCE [LARGE SCALE MRNA] OF 1361-2036 (ISOFORM 2)</scope>
    <source>
        <tissue>Brain</tissue>
    </source>
</reference>
<reference key="8">
    <citation type="journal article" date="2006" name="Cell">
        <title>Global, in vivo, and site-specific phosphorylation dynamics in signaling networks.</title>
        <authorList>
            <person name="Olsen J.V."/>
            <person name="Blagoev B."/>
            <person name="Gnad F."/>
            <person name="Macek B."/>
            <person name="Kumar C."/>
            <person name="Mortensen P."/>
            <person name="Mann M."/>
        </authorList>
    </citation>
    <scope>IDENTIFICATION BY MASS SPECTROMETRY [LARGE SCALE ANALYSIS]</scope>
    <source>
        <tissue>Cervix carcinoma</tissue>
    </source>
</reference>
<reference key="9">
    <citation type="journal article" date="2007" name="Science">
        <title>ATM and ATR substrate analysis reveals extensive protein networks responsive to DNA damage.</title>
        <authorList>
            <person name="Matsuoka S."/>
            <person name="Ballif B.A."/>
            <person name="Smogorzewska A."/>
            <person name="McDonald E.R. III"/>
            <person name="Hurov K.E."/>
            <person name="Luo J."/>
            <person name="Bakalarski C.E."/>
            <person name="Zhao Z."/>
            <person name="Solimini N."/>
            <person name="Lerenthal Y."/>
            <person name="Shiloh Y."/>
            <person name="Gygi S.P."/>
            <person name="Elledge S.J."/>
        </authorList>
    </citation>
    <scope>IDENTIFICATION BY MASS SPECTROMETRY [LARGE SCALE ANALYSIS]</scope>
    <source>
        <tissue>Embryonic kidney</tissue>
    </source>
</reference>
<reference key="10">
    <citation type="journal article" date="2008" name="J. Proteome Res.">
        <title>Combining protein-based IMAC, peptide-based IMAC, and MudPIT for efficient phosphoproteomic analysis.</title>
        <authorList>
            <person name="Cantin G.T."/>
            <person name="Yi W."/>
            <person name="Lu B."/>
            <person name="Park S.K."/>
            <person name="Xu T."/>
            <person name="Lee J.-D."/>
            <person name="Yates J.R. III"/>
        </authorList>
    </citation>
    <scope>PHOSPHORYLATION [LARGE SCALE ANALYSIS] AT THR-778</scope>
    <scope>IDENTIFICATION BY MASS SPECTROMETRY [LARGE SCALE ANALYSIS]</scope>
    <source>
        <tissue>Cervix carcinoma</tissue>
    </source>
</reference>
<reference key="11">
    <citation type="journal article" date="2008" name="Proc. Natl. Acad. Sci. U.S.A.">
        <title>A quantitative atlas of mitotic phosphorylation.</title>
        <authorList>
            <person name="Dephoure N."/>
            <person name="Zhou C."/>
            <person name="Villen J."/>
            <person name="Beausoleil S.A."/>
            <person name="Bakalarski C.E."/>
            <person name="Elledge S.J."/>
            <person name="Gygi S.P."/>
        </authorList>
    </citation>
    <scope>PHOSPHORYLATION [LARGE SCALE ANALYSIS] AT SER-773</scope>
    <scope>IDENTIFICATION BY MASS SPECTROMETRY [LARGE SCALE ANALYSIS]</scope>
    <source>
        <tissue>Cervix carcinoma</tissue>
    </source>
</reference>
<reference key="12">
    <citation type="journal article" date="2009" name="Sci. Signal.">
        <title>Quantitative phosphoproteomic analysis of T cell receptor signaling reveals system-wide modulation of protein-protein interactions.</title>
        <authorList>
            <person name="Mayya V."/>
            <person name="Lundgren D.H."/>
            <person name="Hwang S.-I."/>
            <person name="Rezaul K."/>
            <person name="Wu L."/>
            <person name="Eng J.K."/>
            <person name="Rodionov V."/>
            <person name="Han D.K."/>
        </authorList>
    </citation>
    <scope>PHOSPHORYLATION [LARGE SCALE ANALYSIS] AT SER-797</scope>
    <scope>IDENTIFICATION BY MASS SPECTROMETRY [LARGE SCALE ANALYSIS]</scope>
    <source>
        <tissue>Leukemic T-cell</tissue>
    </source>
</reference>
<reference key="13">
    <citation type="journal article" date="2010" name="Sci. Signal.">
        <title>Quantitative phosphoproteomics reveals widespread full phosphorylation site occupancy during mitosis.</title>
        <authorList>
            <person name="Olsen J.V."/>
            <person name="Vermeulen M."/>
            <person name="Santamaria A."/>
            <person name="Kumar C."/>
            <person name="Miller M.L."/>
            <person name="Jensen L.J."/>
            <person name="Gnad F."/>
            <person name="Cox J."/>
            <person name="Jensen T.S."/>
            <person name="Nigg E.A."/>
            <person name="Brunak S."/>
            <person name="Mann M."/>
        </authorList>
    </citation>
    <scope>PHOSPHORYLATION [LARGE SCALE ANALYSIS] AT THR-754 AND SER-773</scope>
    <scope>IDENTIFICATION BY MASS SPECTROMETRY [LARGE SCALE ANALYSIS]</scope>
    <source>
        <tissue>Cervix carcinoma</tissue>
    </source>
</reference>
<reference key="14">
    <citation type="journal article" date="2011" name="Sci. Signal.">
        <title>System-wide temporal characterization of the proteome and phosphoproteome of human embryonic stem cell differentiation.</title>
        <authorList>
            <person name="Rigbolt K.T."/>
            <person name="Prokhorova T.A."/>
            <person name="Akimov V."/>
            <person name="Henningsen J."/>
            <person name="Johansen P.T."/>
            <person name="Kratchmarova I."/>
            <person name="Kassem M."/>
            <person name="Mann M."/>
            <person name="Olsen J.V."/>
            <person name="Blagoev B."/>
        </authorList>
    </citation>
    <scope>PHOSPHORYLATION [LARGE SCALE ANALYSIS] AT THR-754; SER-860; SER-861 AND SER-864</scope>
    <scope>IDENTIFICATION BY MASS SPECTROMETRY [LARGE SCALE ANALYSIS]</scope>
</reference>
<reference key="15">
    <citation type="journal article" date="2013" name="J. Proteome Res.">
        <title>Toward a comprehensive characterization of a human cancer cell phosphoproteome.</title>
        <authorList>
            <person name="Zhou H."/>
            <person name="Di Palma S."/>
            <person name="Preisinger C."/>
            <person name="Peng M."/>
            <person name="Polat A.N."/>
            <person name="Heck A.J."/>
            <person name="Mohammed S."/>
        </authorList>
    </citation>
    <scope>PHOSPHORYLATION [LARGE SCALE ANALYSIS] AT SER-711; SER-721; THR-754; SER-773; SER-797; SER-860 AND SER-861</scope>
    <scope>IDENTIFICATION BY MASS SPECTROMETRY [LARGE SCALE ANALYSIS]</scope>
    <source>
        <tissue>Cervix carcinoma</tissue>
        <tissue>Erythroleukemia</tissue>
    </source>
</reference>
<reference key="16">
    <citation type="journal article" date="2014" name="J. Proteomics">
        <title>An enzyme assisted RP-RPLC approach for in-depth analysis of human liver phosphoproteome.</title>
        <authorList>
            <person name="Bian Y."/>
            <person name="Song C."/>
            <person name="Cheng K."/>
            <person name="Dong M."/>
            <person name="Wang F."/>
            <person name="Huang J."/>
            <person name="Sun D."/>
            <person name="Wang L."/>
            <person name="Ye M."/>
            <person name="Zou H."/>
        </authorList>
    </citation>
    <scope>PHOSPHORYLATION [LARGE SCALE ANALYSIS] AT SER-986; SER-990 AND SER-994</scope>
    <scope>IDENTIFICATION BY MASS SPECTROMETRY [LARGE SCALE ANALYSIS]</scope>
    <source>
        <tissue>Liver</tissue>
    </source>
</reference>
<reference key="17">
    <citation type="journal article" date="2020" name="Am. J. Hum. Genet.">
        <title>Bi-allelic variants in RALGAPA1 cause profound neurodevelopmental disability, muscular hypotonia, infantile spasms, and feeding abnormalities.</title>
        <authorList>
            <person name="Wagner M."/>
            <person name="Skorobogatko Y."/>
            <person name="Pode-Shakked B."/>
            <person name="Powell C.M."/>
            <person name="Alhaddad B."/>
            <person name="Seibt A."/>
            <person name="Barel O."/>
            <person name="Heimer G."/>
            <person name="Hoffmann C."/>
            <person name="Demmer L.A."/>
            <person name="Perilla-Young Y."/>
            <person name="Remke M."/>
            <person name="Wieczorek D."/>
            <person name="Navaratnarajah T."/>
            <person name="Lichtner P."/>
            <person name="Klee D."/>
            <person name="Shamseldin H.E."/>
            <person name="Al Mutairi F."/>
            <person name="Mayatepek E."/>
            <person name="Strom T."/>
            <person name="Meitinger T."/>
            <person name="Alkuraya F.S."/>
            <person name="Anikster Y."/>
            <person name="Saltiel A.R."/>
            <person name="Distelmaier F."/>
        </authorList>
    </citation>
    <scope>INVOLVEMENT IN NEDHRIT</scope>
    <scope>VARIANTS NEDHRIT 204-GLU--HIS-2036 DEL; 376-ARG--HIS-2036 DEL; SER-1076 AND 1911-SER--HIS-2036 DEL</scope>
    <scope>CHARACTERIZATION OF VARIANT NEDHRIT SER-1076</scope>
</reference>
<proteinExistence type="evidence at protein level"/>
<sequence>MFSKKPHGDVKKSTQKVLDTKKDALTRLKHLRIVIENAESIDLKQFFDQHFSHIYYVFFENFVTIEASLKQKGHKSQREELDAILFIFEKILQLLPERIHQRWQFHSIGLILKKLLHTGNSLKIRREGVRLFLLWLQALQNNCSKEQLWMFSCLIPGFSAPQSEHGPRTLDNLINPPLNLQETQVTIEEITPLVPPQSGDKGQEDLTSYFLEALLKYIVIQVKSLEWKNKENQERGFSFLFSHFKKYYLPYIFPNICKENSLYHPILDIPQMRPKPHYVVIKKDAETNEAIYCTKEPFIKARVIVIRWLVSFWLEPKPHTGPHIPGMEGEVLPKNIQRAAASLVSREESKNDNADKTDRTTEPEQSHSNTSTLTEREPSSSSLCSIDEEHLTDIEIVRRVFSSKRSNVNFVTEIFRQAFLLPICEAAAMRKVVKVYQEWIQQEEKPLFMQEPEEIVITSSDLPCIENVTDHDISMEEGEKREEENGTNTADHVRNSSWAKNGSYQGALHNASEEATEQNIRAGTQAVLQVFIINSSNIFLLEPANEIKNLLDEHTDMCKRILNIYRYMVVQVSMDKKTWEQMLLVLLRVTESVLKMPSQAFLQFQGKKNMTLAGRLAGPLFQTLIVAWIKANLNVYISRELWDDLLSVLSSLTYWEELATEWSLTMETLTKVLARNLYSLDLSDLPLDKLSEQKQKKHKGKGVGHEFQKVSVDKSFSRGWSRDQPGQAPMRQRSATTTGSPGTEKARSIVRQKTVDIDDAQILPRSTRVRHFSQSEETGNEVFGALNEEQPLPRSSSTSDILEPFTVERAKVNKEDMSQKLPPLNSDIGGSSANVPDLMDEFIAERLRSGNASTMTRRGSSPGSLEIPKDLPDILNKQNQMRPIDDPGVPSEWTSPASAGSSDLISSDSHSDSFSAFQYDGRKFDNFGFGTDTGVTSSADVDSGSGHHQSAEEQEVASLTTLHIDSETSSLNQQAFSAEVATITGSESASPVHSPLGSRSQTPSPSTLNIDHMEQKDLQLDEKLHHSVLQTPDDLEISEFPSECCSVMAGGTLTGWHADVATVMWRRMLGILGDVNSIMDPEIHAQVFDYLCELWQNLAKIRDNLGISTDNLTSPSPPVLIPPLRILTPWLFKATMLTDKYKQGKLHAYKLICNTMKRRQDVSPNRDFLTHFYNIMHCGLLHIDQDIVNTIIKHCSPQFFSLGLPGATMLIMDFIVAAGRVASSAFLNAPRVEAQVLLGSLVCFPNLYCELPSLHPNIPDVAVSQFTDVKELIIKTVLSSARDEPSGPARCVALCSLGIWICEELVHESHHPQIKEALNVICVSLKFTNKTVAHVACNMLHMLVHYVPRLQIYQPDSPLKIIQILIATITHLLPSTEASSYEMDKRLVVSLLLCLLDWIMALPLKTLLQPFHATGAESDKTEKSVLNCIYKVLHGCVYGAQCFSNPRYFPMSLSDLASVDYDPFMHLESLKEPEPLHSPDSERSSKLQPVTEVKTQMQHGLISIAARTVITHLVNHLGHYPMSGGPAMLTSQVCENHDNHYSESTELSPELFESPNIQFFVLNNTTLVSCIQIRSEENMPGGGLSAGLASANSNVRIIVRDLSGKYSWDSAILYGPPPVSGLSEPTSFMLSLSHQEKPEEPPTSNECLEDITVKDGLSLQFKRFRETVPTWDTIRDEEDVLDELLQYLGVTSPECLQRTGISLNIPAPQPVCISEKQENDVINAILKQHTEEKEFVEKHFNDLNMKAVEQDEPIPQKPQSAFYYCRLLLSILGMNSWDKRRSFHLLKKNEKLLRELRNLDSRQCRETHKIAVFYVAEGQEDKHSILTNTGGSQAYEDFVAGLGWEVNLTNHCGFMGGLQKNKSTGLTTPYFATSTVEVIFHVSTRMPSDSDDSLTKKLRHLGNDEVHIVWSEHTRDYRRGIIPTEFGDVLIVIYPMKNHMFSIQIMKKPEVPFFGPLFDGAIVNGKVLPIMVRATAINASRALKSLIPLYQNFYEERARYLQTIVQHHLEPTTFEDFAAQVFSPAPYHHLPSDADH</sequence>
<comment type="function">
    <text evidence="1">Catalytic subunit of the heterodimeric RalGAP1 complex which acts as a GTPase activator for the Ras-like small GTPases RALA and RALB.</text>
</comment>
<comment type="subunit">
    <text evidence="1">Component of the heterodimeric RalGAP1 complex with RALGAPB. Heterodimerization is required for activity. Interacts with the HLH region of TCF3/isoform E12 (By similarity).</text>
</comment>
<comment type="subcellular location">
    <subcellularLocation>
        <location evidence="1">Cytoplasm</location>
    </subcellularLocation>
    <subcellularLocation>
        <location evidence="1">Nucleus</location>
    </subcellularLocation>
    <text evidence="1">Translocated to the nucleus, when associated with TCF3/E12.</text>
</comment>
<comment type="alternative products">
    <event type="alternative splicing"/>
    <isoform>
        <id>Q6GYQ0-1</id>
        <name>1</name>
        <sequence type="displayed"/>
    </isoform>
    <isoform>
        <id>Q6GYQ0-2</id>
        <name>2</name>
        <sequence type="described" ref="VSP_011328"/>
    </isoform>
    <isoform>
        <id>Q6GYQ0-3</id>
        <name>3</name>
        <sequence type="described" ref="VSP_011324 VSP_011325 VSP_011326"/>
    </isoform>
    <isoform>
        <id>Q6GYQ0-4</id>
        <name>4</name>
        <sequence type="described" ref="VSP_011327"/>
    </isoform>
    <isoform>
        <id>Q6GYQ0-5</id>
        <name>5</name>
        <sequence type="described" ref="VSP_011329"/>
    </isoform>
    <isoform>
        <id>Q6GYQ0-6</id>
        <name>6</name>
        <sequence type="described" ref="VSP_011324"/>
    </isoform>
    <isoform>
        <id>Q6GYQ0-7</id>
        <name>7</name>
        <sequence type="described" ref="VSP_054485"/>
    </isoform>
</comment>
<comment type="tissue specificity">
    <text evidence="7">Widely expressed.</text>
</comment>
<comment type="disease" evidence="9">
    <disease id="DI-05772">
        <name>Neurodevelopmental disorder with hypotonia, neonatal respiratory insufficiency, and thermodysregulation</name>
        <acronym>NEDHRIT</acronym>
        <description>An autosomal recessive disorder characterized by profound neurodevelopmental disability, muscular hypotonia, feeding abnormalities, recurrent fever episodes, infantile spasms, and moderate dysmorphic facial features. Brain imaging shows thin corpus or dysplastic corpus callosum, and additional unspecific abnormalities including gray matter heterotopias, ectopic posterior pituitary, signal abnormalities in basal ganglia, and stratum subependymale.</description>
        <dbReference type="MIM" id="618797"/>
    </disease>
    <text>The disease is caused by variants affecting the gene represented in this entry.</text>
</comment>
<comment type="sequence caution" evidence="16">
    <conflict type="erroneous initiation">
        <sequence resource="EMBL-CDS" id="BAC86772"/>
    </conflict>
</comment>
<keyword id="KW-0025">Alternative splicing</keyword>
<keyword id="KW-0175">Coiled coil</keyword>
<keyword id="KW-0963">Cytoplasm</keyword>
<keyword id="KW-0225">Disease variant</keyword>
<keyword id="KW-0343">GTPase activation</keyword>
<keyword id="KW-0539">Nucleus</keyword>
<keyword id="KW-0597">Phosphoprotein</keyword>
<keyword id="KW-1267">Proteomics identification</keyword>
<keyword id="KW-1185">Reference proteome</keyword>
<dbReference type="EMBL" id="AY596970">
    <property type="protein sequence ID" value="AAT49271.1"/>
    <property type="molecule type" value="mRNA"/>
</dbReference>
<dbReference type="EMBL" id="AY596971">
    <property type="protein sequence ID" value="AAT49272.1"/>
    <property type="molecule type" value="mRNA"/>
</dbReference>
<dbReference type="EMBL" id="AB511280">
    <property type="protein sequence ID" value="BAH83561.1"/>
    <property type="molecule type" value="mRNA"/>
</dbReference>
<dbReference type="EMBL" id="AB020691">
    <property type="protein sequence ID" value="BAA74907.1"/>
    <property type="molecule type" value="mRNA"/>
</dbReference>
<dbReference type="EMBL" id="AL137818">
    <property type="status" value="NOT_ANNOTATED_CDS"/>
    <property type="molecule type" value="Genomic_DNA"/>
</dbReference>
<dbReference type="EMBL" id="AL160231">
    <property type="status" value="NOT_ANNOTATED_CDS"/>
    <property type="molecule type" value="Genomic_DNA"/>
</dbReference>
<dbReference type="EMBL" id="AL162311">
    <property type="status" value="NOT_ANNOTATED_CDS"/>
    <property type="molecule type" value="Genomic_DNA"/>
</dbReference>
<dbReference type="EMBL" id="BC042013">
    <property type="protein sequence ID" value="AAH42013.1"/>
    <property type="molecule type" value="mRNA"/>
</dbReference>
<dbReference type="EMBL" id="BC042045">
    <property type="protein sequence ID" value="AAH42045.1"/>
    <property type="molecule type" value="mRNA"/>
</dbReference>
<dbReference type="EMBL" id="BC150596">
    <property type="protein sequence ID" value="AAI50597.1"/>
    <property type="molecule type" value="mRNA"/>
</dbReference>
<dbReference type="EMBL" id="AL834362">
    <property type="protein sequence ID" value="CAD39026.1"/>
    <property type="molecule type" value="mRNA"/>
</dbReference>
<dbReference type="EMBL" id="AK126975">
    <property type="protein sequence ID" value="BAC86772.1"/>
    <property type="status" value="ALT_INIT"/>
    <property type="molecule type" value="mRNA"/>
</dbReference>
<dbReference type="CCDS" id="CCDS32064.1">
    <molecule id="Q6GYQ0-2"/>
</dbReference>
<dbReference type="CCDS" id="CCDS32065.1">
    <molecule id="Q6GYQ0-1"/>
</dbReference>
<dbReference type="CCDS" id="CCDS61439.1">
    <molecule id="Q6GYQ0-7"/>
</dbReference>
<dbReference type="CCDS" id="CCDS61440.1">
    <molecule id="Q6GYQ0-6"/>
</dbReference>
<dbReference type="RefSeq" id="NP_001269972.1">
    <molecule id="Q6GYQ0-7"/>
    <property type="nucleotide sequence ID" value="NM_001283043.3"/>
</dbReference>
<dbReference type="RefSeq" id="NP_001269973.1">
    <molecule id="Q6GYQ0-6"/>
    <property type="nucleotide sequence ID" value="NM_001283044.3"/>
</dbReference>
<dbReference type="RefSeq" id="NP_001317004.1">
    <property type="nucleotide sequence ID" value="NM_001330075.2"/>
</dbReference>
<dbReference type="RefSeq" id="NP_001333172.1">
    <molecule id="Q6GYQ0-1"/>
    <property type="nucleotide sequence ID" value="NM_001346243.2"/>
</dbReference>
<dbReference type="RefSeq" id="NP_001333174.1">
    <molecule id="Q6GYQ0-6"/>
    <property type="nucleotide sequence ID" value="NM_001346245.2"/>
</dbReference>
<dbReference type="RefSeq" id="NP_001333175.1">
    <property type="nucleotide sequence ID" value="NM_001346246.1"/>
</dbReference>
<dbReference type="RefSeq" id="NP_001333176.1">
    <property type="nucleotide sequence ID" value="NM_001346247.1"/>
</dbReference>
<dbReference type="RefSeq" id="NP_001333177.1">
    <property type="nucleotide sequence ID" value="NM_001346248.1"/>
</dbReference>
<dbReference type="RefSeq" id="NP_001333178.1">
    <property type="nucleotide sequence ID" value="NM_001346249.1"/>
</dbReference>
<dbReference type="RefSeq" id="NP_055805.1">
    <molecule id="Q6GYQ0-1"/>
    <property type="nucleotide sequence ID" value="NM_014990.3"/>
</dbReference>
<dbReference type="RefSeq" id="NP_919277.2">
    <molecule id="Q6GYQ0-2"/>
    <property type="nucleotide sequence ID" value="NM_194301.3"/>
</dbReference>
<dbReference type="SMR" id="Q6GYQ0"/>
<dbReference type="BioGRID" id="128998">
    <property type="interactions" value="80"/>
</dbReference>
<dbReference type="FunCoup" id="Q6GYQ0">
    <property type="interactions" value="4593"/>
</dbReference>
<dbReference type="IntAct" id="Q6GYQ0">
    <property type="interactions" value="33"/>
</dbReference>
<dbReference type="MINT" id="Q6GYQ0"/>
<dbReference type="STRING" id="9606.ENSP00000490119"/>
<dbReference type="GlyCosmos" id="Q6GYQ0">
    <property type="glycosylation" value="1 site, 1 glycan"/>
</dbReference>
<dbReference type="GlyGen" id="Q6GYQ0">
    <property type="glycosylation" value="5 sites, 1 N-linked glycan (1 site), 1 O-linked glycan (4 sites)"/>
</dbReference>
<dbReference type="iPTMnet" id="Q6GYQ0"/>
<dbReference type="PhosphoSitePlus" id="Q6GYQ0"/>
<dbReference type="SwissPalm" id="Q6GYQ0"/>
<dbReference type="BioMuta" id="RALGAPA1"/>
<dbReference type="DMDM" id="51315850"/>
<dbReference type="jPOST" id="Q6GYQ0"/>
<dbReference type="MassIVE" id="Q6GYQ0"/>
<dbReference type="PaxDb" id="9606-ENSP00000302647"/>
<dbReference type="PeptideAtlas" id="Q6GYQ0"/>
<dbReference type="ProteomicsDB" id="66328">
    <molecule id="Q6GYQ0-1"/>
</dbReference>
<dbReference type="ProteomicsDB" id="66329">
    <molecule id="Q6GYQ0-2"/>
</dbReference>
<dbReference type="ProteomicsDB" id="66330">
    <molecule id="Q6GYQ0-3"/>
</dbReference>
<dbReference type="ProteomicsDB" id="66331">
    <molecule id="Q6GYQ0-4"/>
</dbReference>
<dbReference type="ProteomicsDB" id="66332">
    <molecule id="Q6GYQ0-5"/>
</dbReference>
<dbReference type="ProteomicsDB" id="66333">
    <molecule id="Q6GYQ0-6"/>
</dbReference>
<dbReference type="ProteomicsDB" id="7535"/>
<dbReference type="Pumba" id="Q6GYQ0"/>
<dbReference type="Antibodypedia" id="79">
    <property type="antibodies" value="89 antibodies from 19 providers"/>
</dbReference>
<dbReference type="DNASU" id="253959"/>
<dbReference type="Ensembl" id="ENST00000307138.10">
    <molecule id="Q6GYQ0-2"/>
    <property type="protein sequence ID" value="ENSP00000302647.6"/>
    <property type="gene ID" value="ENSG00000174373.17"/>
</dbReference>
<dbReference type="Ensembl" id="ENST00000382366.7">
    <molecule id="Q6GYQ0-7"/>
    <property type="protein sequence ID" value="ENSP00000371803.3"/>
    <property type="gene ID" value="ENSG00000174373.17"/>
</dbReference>
<dbReference type="Ensembl" id="ENST00000389698.7">
    <molecule id="Q6GYQ0-1"/>
    <property type="protein sequence ID" value="ENSP00000374348.3"/>
    <property type="gene ID" value="ENSG00000174373.17"/>
</dbReference>
<dbReference type="Ensembl" id="ENST00000553892.2">
    <molecule id="Q6GYQ0-6"/>
    <property type="protein sequence ID" value="ENSP00000451877.1"/>
    <property type="gene ID" value="ENSG00000174373.17"/>
</dbReference>
<dbReference type="GeneID" id="253959"/>
<dbReference type="KEGG" id="hsa:253959"/>
<dbReference type="UCSC" id="uc001wti.3">
    <molecule id="Q6GYQ0-1"/>
    <property type="organism name" value="human"/>
</dbReference>
<dbReference type="AGR" id="HGNC:17770"/>
<dbReference type="CTD" id="253959"/>
<dbReference type="DisGeNET" id="253959"/>
<dbReference type="GeneCards" id="RALGAPA1"/>
<dbReference type="HGNC" id="HGNC:17770">
    <property type="gene designation" value="RALGAPA1"/>
</dbReference>
<dbReference type="HPA" id="ENSG00000174373">
    <property type="expression patterns" value="Low tissue specificity"/>
</dbReference>
<dbReference type="MalaCards" id="RALGAPA1"/>
<dbReference type="MIM" id="608884">
    <property type="type" value="gene"/>
</dbReference>
<dbReference type="MIM" id="618797">
    <property type="type" value="phenotype"/>
</dbReference>
<dbReference type="neXtProt" id="NX_Q6GYQ0"/>
<dbReference type="OpenTargets" id="ENSG00000174373"/>
<dbReference type="PharmGKB" id="PA165479278"/>
<dbReference type="VEuPathDB" id="HostDB:ENSG00000174373"/>
<dbReference type="eggNOG" id="KOG3686">
    <property type="taxonomic scope" value="Eukaryota"/>
</dbReference>
<dbReference type="GeneTree" id="ENSGT00950000183139"/>
<dbReference type="HOGENOM" id="CLU_001676_0_0_1"/>
<dbReference type="InParanoid" id="Q6GYQ0"/>
<dbReference type="OMA" id="ELMRNGW"/>
<dbReference type="OrthoDB" id="19311at2759"/>
<dbReference type="PAN-GO" id="Q6GYQ0">
    <property type="GO annotations" value="2 GO annotations based on evolutionary models"/>
</dbReference>
<dbReference type="PhylomeDB" id="Q6GYQ0"/>
<dbReference type="TreeFam" id="TF324484"/>
<dbReference type="PathwayCommons" id="Q6GYQ0"/>
<dbReference type="Reactome" id="R-HSA-9013407">
    <property type="pathway name" value="RHOH GTPase cycle"/>
</dbReference>
<dbReference type="SignaLink" id="Q6GYQ0"/>
<dbReference type="SIGNOR" id="Q6GYQ0"/>
<dbReference type="BioGRID-ORCS" id="253959">
    <property type="hits" value="39 hits in 1185 CRISPR screens"/>
</dbReference>
<dbReference type="CD-CODE" id="FB4E32DD">
    <property type="entry name" value="Presynaptic clusters and postsynaptic densities"/>
</dbReference>
<dbReference type="ChiTaRS" id="RALGAPA1">
    <property type="organism name" value="human"/>
</dbReference>
<dbReference type="GeneWiki" id="GARNL1"/>
<dbReference type="GenomeRNAi" id="253959"/>
<dbReference type="Pharos" id="Q6GYQ0">
    <property type="development level" value="Tbio"/>
</dbReference>
<dbReference type="PRO" id="PR:Q6GYQ0"/>
<dbReference type="Proteomes" id="UP000005640">
    <property type="component" value="Chromosome 14"/>
</dbReference>
<dbReference type="RNAct" id="Q6GYQ0">
    <property type="molecule type" value="protein"/>
</dbReference>
<dbReference type="Bgee" id="ENSG00000174373">
    <property type="expression patterns" value="Expressed in endothelial cell and 199 other cell types or tissues"/>
</dbReference>
<dbReference type="ExpressionAtlas" id="Q6GYQ0">
    <property type="expression patterns" value="baseline and differential"/>
</dbReference>
<dbReference type="GO" id="GO:0005737">
    <property type="term" value="C:cytoplasm"/>
    <property type="evidence" value="ECO:0000250"/>
    <property type="project" value="UniProtKB"/>
</dbReference>
<dbReference type="GO" id="GO:0005634">
    <property type="term" value="C:nucleus"/>
    <property type="evidence" value="ECO:0000250"/>
    <property type="project" value="UniProtKB"/>
</dbReference>
<dbReference type="GO" id="GO:0005096">
    <property type="term" value="F:GTPase activator activity"/>
    <property type="evidence" value="ECO:0000250"/>
    <property type="project" value="UniProtKB"/>
</dbReference>
<dbReference type="GO" id="GO:0046982">
    <property type="term" value="F:protein heterodimerization activity"/>
    <property type="evidence" value="ECO:0000353"/>
    <property type="project" value="UniProtKB"/>
</dbReference>
<dbReference type="GO" id="GO:0090630">
    <property type="term" value="P:activation of GTPase activity"/>
    <property type="evidence" value="ECO:0000250"/>
    <property type="project" value="UniProtKB"/>
</dbReference>
<dbReference type="GO" id="GO:0051056">
    <property type="term" value="P:regulation of small GTPase mediated signal transduction"/>
    <property type="evidence" value="ECO:0007669"/>
    <property type="project" value="InterPro"/>
</dbReference>
<dbReference type="FunFam" id="3.40.50.11210:FF:000001">
    <property type="entry name" value="Ral GTPase-activating protein subunit alpha-1 isoform 1"/>
    <property type="match status" value="1"/>
</dbReference>
<dbReference type="Gene3D" id="3.40.50.11210">
    <property type="entry name" value="Rap/Ran-GAP"/>
    <property type="match status" value="1"/>
</dbReference>
<dbReference type="InterPro" id="IPR016024">
    <property type="entry name" value="ARM-type_fold"/>
</dbReference>
<dbReference type="InterPro" id="IPR035974">
    <property type="entry name" value="Rap/Ran-GAP_sf"/>
</dbReference>
<dbReference type="InterPro" id="IPR000331">
    <property type="entry name" value="Rap/Ran_GAP_dom"/>
</dbReference>
<dbReference type="InterPro" id="IPR046859">
    <property type="entry name" value="RGPA/RALGAPB_N"/>
</dbReference>
<dbReference type="InterPro" id="IPR027107">
    <property type="entry name" value="Tuberin/Ral-act_asu"/>
</dbReference>
<dbReference type="PANTHER" id="PTHR10063:SF3">
    <property type="entry name" value="RAL GTPASE-ACTIVATING PROTEIN SUBUNIT ALPHA-1"/>
    <property type="match status" value="1"/>
</dbReference>
<dbReference type="PANTHER" id="PTHR10063">
    <property type="entry name" value="TUBERIN"/>
    <property type="match status" value="1"/>
</dbReference>
<dbReference type="Pfam" id="PF20412">
    <property type="entry name" value="RALGAPB_N"/>
    <property type="match status" value="1"/>
</dbReference>
<dbReference type="Pfam" id="PF02145">
    <property type="entry name" value="Rap_GAP"/>
    <property type="match status" value="1"/>
</dbReference>
<dbReference type="SUPFAM" id="SSF48371">
    <property type="entry name" value="ARM repeat"/>
    <property type="match status" value="1"/>
</dbReference>
<dbReference type="SUPFAM" id="SSF111347">
    <property type="entry name" value="Rap/Ran-GAP"/>
    <property type="match status" value="1"/>
</dbReference>
<dbReference type="PROSITE" id="PS50085">
    <property type="entry name" value="RAPGAP"/>
    <property type="match status" value="1"/>
</dbReference>
<name>RGPA1_HUMAN</name>
<feature type="chain" id="PRO_0000056753" description="Ral GTPase-activating protein subunit alpha-1">
    <location>
        <begin position="1"/>
        <end position="2036"/>
    </location>
</feature>
<feature type="domain" description="Rap-GAP" evidence="5">
    <location>
        <begin position="1796"/>
        <end position="2004"/>
    </location>
</feature>
<feature type="region of interest" description="Disordered" evidence="6">
    <location>
        <begin position="343"/>
        <end position="384"/>
    </location>
</feature>
<feature type="region of interest" description="Disordered" evidence="6">
    <location>
        <begin position="476"/>
        <end position="497"/>
    </location>
</feature>
<feature type="region of interest" description="Disordered" evidence="6">
    <location>
        <begin position="715"/>
        <end position="753"/>
    </location>
</feature>
<feature type="region of interest" description="Disordered" evidence="6">
    <location>
        <begin position="849"/>
        <end position="910"/>
    </location>
</feature>
<feature type="region of interest" description="Disordered" evidence="6">
    <location>
        <begin position="982"/>
        <end position="1009"/>
    </location>
</feature>
<feature type="region of interest" description="Minimal domain that binds to TCF3/E12" evidence="1">
    <location>
        <begin position="1327"/>
        <end position="2035"/>
    </location>
</feature>
<feature type="coiled-coil region" evidence="4">
    <location>
        <begin position="1716"/>
        <end position="1744"/>
    </location>
</feature>
<feature type="compositionally biased region" description="Basic and acidic residues" evidence="6">
    <location>
        <begin position="345"/>
        <end position="365"/>
    </location>
</feature>
<feature type="compositionally biased region" description="Polar residues" evidence="6">
    <location>
        <begin position="366"/>
        <end position="384"/>
    </location>
</feature>
<feature type="compositionally biased region" description="Polar residues" evidence="6">
    <location>
        <begin position="486"/>
        <end position="497"/>
    </location>
</feature>
<feature type="compositionally biased region" description="Polar residues" evidence="6">
    <location>
        <begin position="850"/>
        <end position="863"/>
    </location>
</feature>
<feature type="compositionally biased region" description="Low complexity" evidence="6">
    <location>
        <begin position="895"/>
        <end position="910"/>
    </location>
</feature>
<feature type="compositionally biased region" description="Polar residues" evidence="6">
    <location>
        <begin position="983"/>
        <end position="1009"/>
    </location>
</feature>
<feature type="modified residue" description="Phosphoserine" evidence="22">
    <location>
        <position position="711"/>
    </location>
</feature>
<feature type="modified residue" description="Phosphoserine" evidence="22">
    <location>
        <position position="721"/>
    </location>
</feature>
<feature type="modified residue" description="Phosphothreonine" evidence="20 21 22">
    <location>
        <position position="754"/>
    </location>
</feature>
<feature type="modified residue" description="Phosphoserine" evidence="18 20 22">
    <location>
        <position position="773"/>
    </location>
</feature>
<feature type="modified residue" description="Phosphothreonine" evidence="17">
    <location>
        <position position="778"/>
    </location>
</feature>
<feature type="modified residue" description="Phosphoserine" evidence="19 22">
    <location>
        <position position="797"/>
    </location>
</feature>
<feature type="modified residue" description="Phosphoserine" evidence="21 22">
    <location>
        <position position="860"/>
    </location>
</feature>
<feature type="modified residue" description="Phosphoserine" evidence="21 22">
    <location>
        <position position="861"/>
    </location>
</feature>
<feature type="modified residue" description="Phosphoserine" evidence="21">
    <location>
        <position position="864"/>
    </location>
</feature>
<feature type="modified residue" description="Phosphoserine" evidence="23">
    <location>
        <position position="986"/>
    </location>
</feature>
<feature type="modified residue" description="Phosphoserine" evidence="23">
    <location>
        <position position="990"/>
    </location>
</feature>
<feature type="modified residue" description="Phosphoserine" evidence="23">
    <location>
        <position position="994"/>
    </location>
</feature>
<feature type="modified residue" description="Phosphoserine" evidence="2">
    <location>
        <position position="1000"/>
    </location>
</feature>
<feature type="modified residue" description="Phosphothreonine" evidence="3">
    <location>
        <position position="1002"/>
    </location>
</feature>
<feature type="modified residue" description="Phosphoserine" evidence="2">
    <location>
        <position position="1004"/>
    </location>
</feature>
<feature type="modified residue" description="Phosphoserine" evidence="2">
    <location>
        <position position="1478"/>
    </location>
</feature>
<feature type="splice variant" id="VSP_011324" description="In isoform 3 and isoform 6." evidence="10 15">
    <original>V</original>
    <variation>VAMRSRSIGECALPSAYIRSAKSAPVLIHTSKPFLPDIVLTPLSDELS</variation>
    <location>
        <position position="755"/>
    </location>
</feature>
<feature type="splice variant" id="VSP_054485" description="In isoform 7." evidence="12">
    <original>VNKEDMSQKLPPLN</original>
    <variation>EAEQNATRGSTEGSVQSCNGLFWKESC</variation>
    <location>
        <begin position="812"/>
        <end position="825"/>
    </location>
</feature>
<feature type="splice variant" id="VSP_011325" description="In isoform 3." evidence="10">
    <original>EISEFPSECCSVMAGGTLTGWH</original>
    <variation>GNISKLDIYLFSFRASVSGDHK</variation>
    <location>
        <begin position="1036"/>
        <end position="1057"/>
    </location>
</feature>
<feature type="splice variant" id="VSP_011326" description="In isoform 3." evidence="10">
    <location>
        <begin position="1058"/>
        <end position="2036"/>
    </location>
</feature>
<feature type="splice variant" id="VSP_011327" description="In isoform 4." evidence="14">
    <original>LRHLGNDEVHIVWSEHTRDYRRGIIPTEFGDVLIVIYPMKNHMFSIQIMKKPEVPFFGPLFDGAIVNGKVLPIMVRATAINASRALKSLIPLYQNFYEERARYLQTIVQHHLEPTTFEDFAAQVFSPAPYHHLPSDADH</original>
    <variation>MESHCVAQAGVQWHDLRSLQLLPPRFKESSLLSLLSSWDYRCMPPHLSNFCIFSRDGVSPCWPG</variation>
    <location>
        <begin position="1898"/>
        <end position="2036"/>
    </location>
</feature>
<feature type="splice variant" id="VSP_011328" description="In isoform 2." evidence="11 13">
    <original>DH</original>
    <variation>GSYPEILPSETPTATQVDGADLASPMSPRTSKSRMSMKLRRSSGSANKS</variation>
    <location>
        <begin position="2035"/>
        <end position="2036"/>
    </location>
</feature>
<feature type="splice variant" id="VSP_011329" description="In isoform 5." evidence="12">
    <original>DH</original>
    <variation>VERNAVIVLFLPKPPLENIGHLKAPTQRFYPVKLPQQRR</variation>
    <location>
        <begin position="2035"/>
        <end position="2036"/>
    </location>
</feature>
<feature type="sequence variant" id="VAR_083728" description="In NEDHRIT." evidence="9">
    <location>
        <begin position="204"/>
        <end position="2036"/>
    </location>
</feature>
<feature type="sequence variant" id="VAR_083729" description="In NEDHRIT." evidence="9">
    <location>
        <begin position="376"/>
        <end position="2036"/>
    </location>
</feature>
<feature type="sequence variant" id="VAR_019804" description="In dbSNP:rs2274068." evidence="8">
    <original>T</original>
    <variation>A</variation>
    <location>
        <position position="931"/>
    </location>
</feature>
<feature type="sequence variant" id="VAR_083730" description="In NEDHRIT; undetectable protein expression; dbSNP:rs1595085511." evidence="9">
    <original>N</original>
    <variation>S</variation>
    <location>
        <position position="1076"/>
    </location>
</feature>
<feature type="sequence variant" id="VAR_083731" description="In NEDHRIT." evidence="9">
    <location>
        <begin position="1911"/>
        <end position="2036"/>
    </location>
</feature>
<feature type="mutagenesis site" description="Has no effect on interaction with RALGAPB but causes loss of activity." evidence="8">
    <original>N</original>
    <variation>K</variation>
    <location>
        <position position="1903"/>
    </location>
</feature>
<feature type="sequence conflict" description="In Ref. 3; BAA74907." evidence="16" ref="3">
    <original>G</original>
    <variation>A</variation>
    <location>
        <position position="779"/>
    </location>
</feature>
<feature type="sequence conflict" description="In Ref. 6; CAD39026." evidence="16" ref="6">
    <original>K</original>
    <variation>N</variation>
    <location>
        <position position="1270"/>
    </location>
</feature>
<organism>
    <name type="scientific">Homo sapiens</name>
    <name type="common">Human</name>
    <dbReference type="NCBI Taxonomy" id="9606"/>
    <lineage>
        <taxon>Eukaryota</taxon>
        <taxon>Metazoa</taxon>
        <taxon>Chordata</taxon>
        <taxon>Craniata</taxon>
        <taxon>Vertebrata</taxon>
        <taxon>Euteleostomi</taxon>
        <taxon>Mammalia</taxon>
        <taxon>Eutheria</taxon>
        <taxon>Euarchontoglires</taxon>
        <taxon>Primates</taxon>
        <taxon>Haplorrhini</taxon>
        <taxon>Catarrhini</taxon>
        <taxon>Hominidae</taxon>
        <taxon>Homo</taxon>
    </lineage>
</organism>
<gene>
    <name type="primary">RALGAPA1</name>
    <name type="synonym">GARNL1</name>
    <name type="synonym">KIAA0884</name>
    <name type="synonym">TULIP1</name>
</gene>
<protein>
    <recommendedName>
        <fullName>Ral GTPase-activating protein subunit alpha-1</fullName>
    </recommendedName>
    <alternativeName>
        <fullName>GAP-related-interacting partner to E12</fullName>
        <shortName>GRIPE</shortName>
    </alternativeName>
    <alternativeName>
        <fullName>GTPase-activating Rap/Ran-GAP domain-like 1</fullName>
    </alternativeName>
    <alternativeName>
        <fullName>Tuberin-like protein 1</fullName>
    </alternativeName>
    <alternativeName>
        <fullName>p240</fullName>
    </alternativeName>
</protein>
<accession>Q6GYQ0</accession>
<accession>A6NMA4</accession>
<accession>B9EK38</accession>
<accession>C5NU19</accession>
<accession>O94960</accession>
<accession>Q6GYP9</accession>
<accession>Q6ZT23</accession>
<accession>Q86YF3</accession>
<accession>Q86YF5</accession>
<accession>Q8ND69</accession>